<organism>
    <name type="scientific">Saccharomyces cerevisiae (strain ATCC 204508 / S288c)</name>
    <name type="common">Baker's yeast</name>
    <dbReference type="NCBI Taxonomy" id="559292"/>
    <lineage>
        <taxon>Eukaryota</taxon>
        <taxon>Fungi</taxon>
        <taxon>Dikarya</taxon>
        <taxon>Ascomycota</taxon>
        <taxon>Saccharomycotina</taxon>
        <taxon>Saccharomycetes</taxon>
        <taxon>Saccharomycetales</taxon>
        <taxon>Saccharomycetaceae</taxon>
        <taxon>Saccharomyces</taxon>
    </lineage>
</organism>
<reference key="1">
    <citation type="journal article" date="1997" name="Nature">
        <title>The nucleotide sequence of Saccharomyces cerevisiae chromosome XII.</title>
        <authorList>
            <person name="Johnston M."/>
            <person name="Hillier L.W."/>
            <person name="Riles L."/>
            <person name="Albermann K."/>
            <person name="Andre B."/>
            <person name="Ansorge W."/>
            <person name="Benes V."/>
            <person name="Brueckner M."/>
            <person name="Delius H."/>
            <person name="Dubois E."/>
            <person name="Duesterhoeft A."/>
            <person name="Entian K.-D."/>
            <person name="Floeth M."/>
            <person name="Goffeau A."/>
            <person name="Hebling U."/>
            <person name="Heumann K."/>
            <person name="Heuss-Neitzel D."/>
            <person name="Hilbert H."/>
            <person name="Hilger F."/>
            <person name="Kleine K."/>
            <person name="Koetter P."/>
            <person name="Louis E.J."/>
            <person name="Messenguy F."/>
            <person name="Mewes H.-W."/>
            <person name="Miosga T."/>
            <person name="Moestl D."/>
            <person name="Mueller-Auer S."/>
            <person name="Nentwich U."/>
            <person name="Obermaier B."/>
            <person name="Piravandi E."/>
            <person name="Pohl T.M."/>
            <person name="Portetelle D."/>
            <person name="Purnelle B."/>
            <person name="Rechmann S."/>
            <person name="Rieger M."/>
            <person name="Rinke M."/>
            <person name="Rose M."/>
            <person name="Scharfe M."/>
            <person name="Scherens B."/>
            <person name="Scholler P."/>
            <person name="Schwager C."/>
            <person name="Schwarz S."/>
            <person name="Underwood A.P."/>
            <person name="Urrestarazu L.A."/>
            <person name="Vandenbol M."/>
            <person name="Verhasselt P."/>
            <person name="Vierendeels F."/>
            <person name="Voet M."/>
            <person name="Volckaert G."/>
            <person name="Voss H."/>
            <person name="Wambutt R."/>
            <person name="Wedler E."/>
            <person name="Wedler H."/>
            <person name="Zimmermann F.K."/>
            <person name="Zollner A."/>
            <person name="Hani J."/>
            <person name="Hoheisel J.D."/>
        </authorList>
    </citation>
    <scope>NUCLEOTIDE SEQUENCE [LARGE SCALE GENOMIC DNA]</scope>
    <source>
        <strain>ATCC 204508 / S288c</strain>
    </source>
</reference>
<reference key="2">
    <citation type="journal article" date="2014" name="G3 (Bethesda)">
        <title>The reference genome sequence of Saccharomyces cerevisiae: Then and now.</title>
        <authorList>
            <person name="Engel S.R."/>
            <person name="Dietrich F.S."/>
            <person name="Fisk D.G."/>
            <person name="Binkley G."/>
            <person name="Balakrishnan R."/>
            <person name="Costanzo M.C."/>
            <person name="Dwight S.S."/>
            <person name="Hitz B.C."/>
            <person name="Karra K."/>
            <person name="Nash R.S."/>
            <person name="Weng S."/>
            <person name="Wong E.D."/>
            <person name="Lloyd P."/>
            <person name="Skrzypek M.S."/>
            <person name="Miyasato S.R."/>
            <person name="Simison M."/>
            <person name="Cherry J.M."/>
        </authorList>
    </citation>
    <scope>GENOME REANNOTATION</scope>
    <source>
        <strain>ATCC 204508 / S288c</strain>
    </source>
</reference>
<reference key="3">
    <citation type="journal article" date="2007" name="Genome Res.">
        <title>Approaching a complete repository of sequence-verified protein-encoding clones for Saccharomyces cerevisiae.</title>
        <authorList>
            <person name="Hu Y."/>
            <person name="Rolfs A."/>
            <person name="Bhullar B."/>
            <person name="Murthy T.V.S."/>
            <person name="Zhu C."/>
            <person name="Berger M.F."/>
            <person name="Camargo A.A."/>
            <person name="Kelley F."/>
            <person name="McCarron S."/>
            <person name="Jepson D."/>
            <person name="Richardson A."/>
            <person name="Raphael J."/>
            <person name="Moreira D."/>
            <person name="Taycher E."/>
            <person name="Zuo D."/>
            <person name="Mohr S."/>
            <person name="Kane M.F."/>
            <person name="Williamson J."/>
            <person name="Simpson A.J.G."/>
            <person name="Bulyk M.L."/>
            <person name="Harlow E."/>
            <person name="Marsischky G."/>
            <person name="Kolodner R.D."/>
            <person name="LaBaer J."/>
        </authorList>
    </citation>
    <scope>NUCLEOTIDE SEQUENCE [GENOMIC DNA]</scope>
    <source>
        <strain>ATCC 204508 / S288c</strain>
    </source>
</reference>
<reference key="4">
    <citation type="journal article" date="2003" name="Nature">
        <title>Global analysis of protein expression in yeast.</title>
        <authorList>
            <person name="Ghaemmaghami S."/>
            <person name="Huh W.-K."/>
            <person name="Bower K."/>
            <person name="Howson R.W."/>
            <person name="Belle A."/>
            <person name="Dephoure N."/>
            <person name="O'Shea E.K."/>
            <person name="Weissman J.S."/>
        </authorList>
    </citation>
    <scope>LEVEL OF PROTEIN EXPRESSION [LARGE SCALE ANALYSIS]</scope>
</reference>
<reference key="5">
    <citation type="journal article" date="2004" name="Eukaryot. Cell">
        <title>SYM1 is the stress-induced Saccharomyces cerevisiae ortholog of the mammalian kidney disease gene Mpv17 and is required for ethanol metabolism and tolerance during heat shock.</title>
        <authorList>
            <person name="Trott A."/>
            <person name="Morano K.A."/>
        </authorList>
    </citation>
    <scope>FUNCTION</scope>
    <scope>SUBCELLULAR LOCATION</scope>
</reference>
<reference key="6">
    <citation type="journal article" date="2006" name="Nat. Genet.">
        <title>MPV17 encodes an inner mitochondrial membrane protein and is mutated in infantile hepatic mitochondrial DNA depletion.</title>
        <authorList>
            <person name="Spinazzola A."/>
            <person name="Viscomi C."/>
            <person name="Fernandez-Vizarra E."/>
            <person name="Carrara F."/>
            <person name="D'Adamo P."/>
            <person name="Calvo S."/>
            <person name="Marsano R.M."/>
            <person name="Donnini C."/>
            <person name="Weiher H."/>
            <person name="Strisciuglio P."/>
            <person name="Parini R."/>
            <person name="Sarzi E."/>
            <person name="Chan A."/>
            <person name="Dimauro S."/>
            <person name="Rotig A."/>
            <person name="Gasparini P."/>
            <person name="Ferrero I."/>
            <person name="Mootha V.K."/>
            <person name="Tiranti V."/>
            <person name="Zeviani M."/>
        </authorList>
    </citation>
    <scope>MUTAGENESIS OF ARG-54 AND ASN-172</scope>
</reference>
<dbReference type="EMBL" id="U20865">
    <property type="protein sequence ID" value="AAB67389.1"/>
    <property type="molecule type" value="Genomic_DNA"/>
</dbReference>
<dbReference type="EMBL" id="AY558211">
    <property type="protein sequence ID" value="AAS56537.1"/>
    <property type="molecule type" value="Genomic_DNA"/>
</dbReference>
<dbReference type="EMBL" id="BK006945">
    <property type="protein sequence ID" value="DAA09565.1"/>
    <property type="molecule type" value="Genomic_DNA"/>
</dbReference>
<dbReference type="PIR" id="S59397">
    <property type="entry name" value="S59397"/>
</dbReference>
<dbReference type="RefSeq" id="NP_013352.1">
    <property type="nucleotide sequence ID" value="NM_001182138.1"/>
</dbReference>
<dbReference type="BioGRID" id="31519">
    <property type="interactions" value="60"/>
</dbReference>
<dbReference type="DIP" id="DIP-4568N"/>
<dbReference type="FunCoup" id="Q06563">
    <property type="interactions" value="721"/>
</dbReference>
<dbReference type="IntAct" id="Q06563">
    <property type="interactions" value="1"/>
</dbReference>
<dbReference type="STRING" id="4932.YLR251W"/>
<dbReference type="TCDB" id="1.A.126.1.2">
    <property type="family name" value="the mpv17/pmp22 4 tms putative channel (mpv17) family"/>
</dbReference>
<dbReference type="PaxDb" id="4932-YLR251W"/>
<dbReference type="PeptideAtlas" id="Q06563"/>
<dbReference type="EnsemblFungi" id="YLR251W_mRNA">
    <property type="protein sequence ID" value="YLR251W"/>
    <property type="gene ID" value="YLR251W"/>
</dbReference>
<dbReference type="GeneID" id="850953"/>
<dbReference type="KEGG" id="sce:YLR251W"/>
<dbReference type="AGR" id="SGD:S000004241"/>
<dbReference type="SGD" id="S000004241">
    <property type="gene designation" value="SYM1"/>
</dbReference>
<dbReference type="VEuPathDB" id="FungiDB:YLR251W"/>
<dbReference type="eggNOG" id="KOG1944">
    <property type="taxonomic scope" value="Eukaryota"/>
</dbReference>
<dbReference type="GeneTree" id="ENSGT00940000160891"/>
<dbReference type="HOGENOM" id="CLU_049109_8_1_1"/>
<dbReference type="InParanoid" id="Q06563"/>
<dbReference type="OMA" id="CAPTMIG"/>
<dbReference type="OrthoDB" id="430207at2759"/>
<dbReference type="BioCyc" id="YEAST:G3O-32356-MONOMER"/>
<dbReference type="Reactome" id="R-SCE-9033241">
    <property type="pathway name" value="Peroxisomal protein import"/>
</dbReference>
<dbReference type="BioGRID-ORCS" id="850953">
    <property type="hits" value="5 hits in 10 CRISPR screens"/>
</dbReference>
<dbReference type="PRO" id="PR:Q06563"/>
<dbReference type="Proteomes" id="UP000002311">
    <property type="component" value="Chromosome XII"/>
</dbReference>
<dbReference type="RNAct" id="Q06563">
    <property type="molecule type" value="protein"/>
</dbReference>
<dbReference type="GO" id="GO:0005737">
    <property type="term" value="C:cytoplasm"/>
    <property type="evidence" value="ECO:0000318"/>
    <property type="project" value="GO_Central"/>
</dbReference>
<dbReference type="GO" id="GO:0005743">
    <property type="term" value="C:mitochondrial inner membrane"/>
    <property type="evidence" value="ECO:0000314"/>
    <property type="project" value="SGD"/>
</dbReference>
<dbReference type="GO" id="GO:0005739">
    <property type="term" value="C:mitochondrion"/>
    <property type="evidence" value="ECO:0007005"/>
    <property type="project" value="SGD"/>
</dbReference>
<dbReference type="GO" id="GO:0006067">
    <property type="term" value="P:ethanol metabolic process"/>
    <property type="evidence" value="ECO:0000315"/>
    <property type="project" value="SGD"/>
</dbReference>
<dbReference type="InterPro" id="IPR007248">
    <property type="entry name" value="Mpv17_PMP22"/>
</dbReference>
<dbReference type="PANTHER" id="PTHR11266">
    <property type="entry name" value="PEROXISOMAL MEMBRANE PROTEIN 2, PXMP2 MPV17"/>
    <property type="match status" value="1"/>
</dbReference>
<dbReference type="PANTHER" id="PTHR11266:SF17">
    <property type="entry name" value="PROTEIN MPV17"/>
    <property type="match status" value="1"/>
</dbReference>
<dbReference type="Pfam" id="PF04117">
    <property type="entry name" value="Mpv17_PMP22"/>
    <property type="match status" value="1"/>
</dbReference>
<sequence length="197" mass="22915">MKLLHLYEASLKRRPKTTNAIMTGALFGIGDVSAQLLFPTSKVNKGYDYKRTARAVIYGSLIFSFIGDKWYKILNNKIYMRNRPQYHWSNMVLRVAVDQLAFAPLGLPFYFTCMSIMEGRSFDVAKLKIKEQWWPTLLTNWAVWPLFQAINFSVVPLQHRLLAVNVVAIFWNTYLSYKNSKVMEKDKVPVHYPPVVE</sequence>
<comment type="function">
    <text evidence="3">May be involved in cellular response to stress. Required to maintain mitochondrial DNA (mtDNA) integrity and stability. Required for ethanol metabolism and tolerance during heat shock.</text>
</comment>
<comment type="subcellular location">
    <subcellularLocation>
        <location evidence="3">Mitochondrion inner membrane</location>
        <topology evidence="3">Multi-pass membrane protein</topology>
    </subcellularLocation>
</comment>
<comment type="miscellaneous">
    <text evidence="2">Present with 1870 molecules/cell in log phase SD medium.</text>
</comment>
<comment type="similarity">
    <text evidence="5">Belongs to the peroxisomal membrane protein PXMP2/4 family.</text>
</comment>
<accession>Q06563</accession>
<accession>D6VYP9</accession>
<evidence type="ECO:0000255" key="1"/>
<evidence type="ECO:0000269" key="2">
    <source>
    </source>
</evidence>
<evidence type="ECO:0000269" key="3">
    <source>
    </source>
</evidence>
<evidence type="ECO:0000269" key="4">
    <source>
    </source>
</evidence>
<evidence type="ECO:0000305" key="5"/>
<feature type="chain" id="PRO_0000234417" description="Protein SYM1">
    <location>
        <begin position="1"/>
        <end position="197"/>
    </location>
</feature>
<feature type="transmembrane region" description="Helical" evidence="1">
    <location>
        <begin position="20"/>
        <end position="40"/>
    </location>
</feature>
<feature type="transmembrane region" description="Helical" evidence="1">
    <location>
        <begin position="55"/>
        <end position="75"/>
    </location>
</feature>
<feature type="transmembrane region" description="Helical" evidence="1">
    <location>
        <begin position="97"/>
        <end position="117"/>
    </location>
</feature>
<feature type="transmembrane region" description="Helical" evidence="1">
    <location>
        <begin position="137"/>
        <end position="157"/>
    </location>
</feature>
<feature type="mutagenesis site" description="Almost abolishes function." evidence="4">
    <original>R</original>
    <variation>Q</variation>
    <location>
        <position position="54"/>
    </location>
</feature>
<feature type="mutagenesis site" description="Loss of function." evidence="4">
    <original>R</original>
    <variation>W</variation>
    <location>
        <position position="54"/>
    </location>
</feature>
<feature type="mutagenesis site" description="Loss of function." evidence="4">
    <original>N</original>
    <variation>K</variation>
    <location>
        <position position="172"/>
    </location>
</feature>
<keyword id="KW-0472">Membrane</keyword>
<keyword id="KW-0496">Mitochondrion</keyword>
<keyword id="KW-0999">Mitochondrion inner membrane</keyword>
<keyword id="KW-1185">Reference proteome</keyword>
<keyword id="KW-0812">Transmembrane</keyword>
<keyword id="KW-1133">Transmembrane helix</keyword>
<proteinExistence type="evidence at protein level"/>
<gene>
    <name type="primary">SYM1</name>
    <name type="ordered locus">YLR251W</name>
</gene>
<name>SYM1_YEAST</name>
<protein>
    <recommendedName>
        <fullName>Protein SYM1</fullName>
    </recommendedName>
    <alternativeName>
        <fullName>Stress-inducible yeast MPV17 protein 1</fullName>
    </alternativeName>
</protein>